<protein>
    <recommendedName>
        <fullName>Uncharacterized protein MJ0795</fullName>
    </recommendedName>
</protein>
<reference key="1">
    <citation type="journal article" date="1996" name="Science">
        <title>Complete genome sequence of the methanogenic archaeon, Methanococcus jannaschii.</title>
        <authorList>
            <person name="Bult C.J."/>
            <person name="White O."/>
            <person name="Olsen G.J."/>
            <person name="Zhou L."/>
            <person name="Fleischmann R.D."/>
            <person name="Sutton G.G."/>
            <person name="Blake J.A."/>
            <person name="FitzGerald L.M."/>
            <person name="Clayton R.A."/>
            <person name="Gocayne J.D."/>
            <person name="Kerlavage A.R."/>
            <person name="Dougherty B.A."/>
            <person name="Tomb J.-F."/>
            <person name="Adams M.D."/>
            <person name="Reich C.I."/>
            <person name="Overbeek R."/>
            <person name="Kirkness E.F."/>
            <person name="Weinstock K.G."/>
            <person name="Merrick J.M."/>
            <person name="Glodek A."/>
            <person name="Scott J.L."/>
            <person name="Geoghagen N.S.M."/>
            <person name="Weidman J.F."/>
            <person name="Fuhrmann J.L."/>
            <person name="Nguyen D."/>
            <person name="Utterback T.R."/>
            <person name="Kelley J.M."/>
            <person name="Peterson J.D."/>
            <person name="Sadow P.W."/>
            <person name="Hanna M.C."/>
            <person name="Cotton M.D."/>
            <person name="Roberts K.M."/>
            <person name="Hurst M.A."/>
            <person name="Kaine B.P."/>
            <person name="Borodovsky M."/>
            <person name="Klenk H.-P."/>
            <person name="Fraser C.M."/>
            <person name="Smith H.O."/>
            <person name="Woese C.R."/>
            <person name="Venter J.C."/>
        </authorList>
    </citation>
    <scope>NUCLEOTIDE SEQUENCE [LARGE SCALE GENOMIC DNA]</scope>
    <source>
        <strain>ATCC 43067 / DSM 2661 / JAL-1 / JCM 10045 / NBRC 100440</strain>
    </source>
</reference>
<comment type="subcellular location">
    <subcellularLocation>
        <location evidence="2">Membrane</location>
        <topology evidence="2">Single-pass membrane protein</topology>
    </subcellularLocation>
</comment>
<comment type="similarity">
    <text evidence="2">To M.jannaschii MJ1506 and MJ1561.</text>
</comment>
<keyword id="KW-0472">Membrane</keyword>
<keyword id="KW-1185">Reference proteome</keyword>
<keyword id="KW-0812">Transmembrane</keyword>
<keyword id="KW-1133">Transmembrane helix</keyword>
<feature type="chain" id="PRO_0000107046" description="Uncharacterized protein MJ0795">
    <location>
        <begin position="1"/>
        <end position="504"/>
    </location>
</feature>
<feature type="transmembrane region" description="Helical" evidence="1">
    <location>
        <begin position="6"/>
        <end position="26"/>
    </location>
</feature>
<evidence type="ECO:0000255" key="1"/>
<evidence type="ECO:0000305" key="2"/>
<gene>
    <name type="ordered locus">MJ0795</name>
</gene>
<organism>
    <name type="scientific">Methanocaldococcus jannaschii (strain ATCC 43067 / DSM 2661 / JAL-1 / JCM 10045 / NBRC 100440)</name>
    <name type="common">Methanococcus jannaschii</name>
    <dbReference type="NCBI Taxonomy" id="243232"/>
    <lineage>
        <taxon>Archaea</taxon>
        <taxon>Methanobacteriati</taxon>
        <taxon>Methanobacteriota</taxon>
        <taxon>Methanomada group</taxon>
        <taxon>Methanococci</taxon>
        <taxon>Methanococcales</taxon>
        <taxon>Methanocaldococcaceae</taxon>
        <taxon>Methanocaldococcus</taxon>
    </lineage>
</organism>
<accession>Q58205</accession>
<proteinExistence type="predicted"/>
<dbReference type="EMBL" id="L77117">
    <property type="protein sequence ID" value="AAB98798.1"/>
    <property type="molecule type" value="Genomic_DNA"/>
</dbReference>
<dbReference type="PIR" id="C64399">
    <property type="entry name" value="C64399"/>
</dbReference>
<dbReference type="RefSeq" id="WP_010870303.1">
    <property type="nucleotide sequence ID" value="NC_000909.1"/>
</dbReference>
<dbReference type="STRING" id="243232.MJ_0795"/>
<dbReference type="PaxDb" id="243232-MJ_0795"/>
<dbReference type="EnsemblBacteria" id="AAB98798">
    <property type="protein sequence ID" value="AAB98798"/>
    <property type="gene ID" value="MJ_0795"/>
</dbReference>
<dbReference type="GeneID" id="1451675"/>
<dbReference type="KEGG" id="mja:MJ_0795"/>
<dbReference type="eggNOG" id="arCOG04400">
    <property type="taxonomic scope" value="Archaea"/>
</dbReference>
<dbReference type="HOGENOM" id="CLU_540387_0_0_2"/>
<dbReference type="InParanoid" id="Q58205"/>
<dbReference type="OrthoDB" id="65070at2157"/>
<dbReference type="PhylomeDB" id="Q58205"/>
<dbReference type="Proteomes" id="UP000000805">
    <property type="component" value="Chromosome"/>
</dbReference>
<dbReference type="GO" id="GO:0016020">
    <property type="term" value="C:membrane"/>
    <property type="evidence" value="ECO:0007669"/>
    <property type="project" value="UniProtKB-SubCell"/>
</dbReference>
<dbReference type="InterPro" id="IPR011635">
    <property type="entry name" value="CARDB"/>
</dbReference>
<dbReference type="PANTHER" id="PTHR35902:SF3">
    <property type="entry name" value="NPCBM-ASSOCIATED, NEW3 DOMAIN OF ALPHA-GALACTOSIDASE"/>
    <property type="match status" value="1"/>
</dbReference>
<dbReference type="PANTHER" id="PTHR35902">
    <property type="entry name" value="S-LAYER DOMAIN-LIKE PROTEIN-RELATED"/>
    <property type="match status" value="1"/>
</dbReference>
<dbReference type="Pfam" id="PF07705">
    <property type="entry name" value="CARDB"/>
    <property type="match status" value="1"/>
</dbReference>
<sequence length="504" mass="57147">MKRLKNLFIIFIFLFLLSQVSAYITFKNIDYNAQYLEPSKTYDLYITIESDKEINNTVVYIEPTNQISKENIEIIRGKQWIGHLFPYEYGVAHLIIKINPNAPNYDYKITGYCNYTKGNQQYSENRIFTLPVRGKANLVIETTNNILKVGNNQILLLLTNKGTGTAENIKIEFQNSNNLMVLGDNTFTISALGSKTSTYIPLTIFAKKEGVYSINYKISYKNPYNLLELTQKSETIEGDSKTETLTYQNKNIVEETGILTFNVFPNELISINIKNPTITVGKIENLTISIKNNYKDSLFVVQISKYFIGNNQKSIFIKKGETKNLTFQIKVDKEGVTSIPIVIYFDNNQIEKNLTINVVGKADLVLSGIDIESSFNEIKITGDIDNIGTGKAKSVLISIEKTKNIIPKKPYENYFVGTLNPDDYGSFELHCQINGNVNEIPLKISYRDEDNNLITIYKTVKISKEVVSLKTNNNGGINYLVVGIAILFCVGVVYLIYRGFVKKK</sequence>
<name>Y795_METJA</name>